<name>SYN_PSEA6</name>
<accession>Q15UN9</accession>
<feature type="chain" id="PRO_1000051414" description="Asparagine--tRNA ligase">
    <location>
        <begin position="1"/>
        <end position="465"/>
    </location>
</feature>
<organism>
    <name type="scientific">Pseudoalteromonas atlantica (strain T6c / ATCC BAA-1087)</name>
    <dbReference type="NCBI Taxonomy" id="3042615"/>
    <lineage>
        <taxon>Bacteria</taxon>
        <taxon>Pseudomonadati</taxon>
        <taxon>Pseudomonadota</taxon>
        <taxon>Gammaproteobacteria</taxon>
        <taxon>Alteromonadales</taxon>
        <taxon>Alteromonadaceae</taxon>
        <taxon>Paraglaciecola</taxon>
    </lineage>
</organism>
<proteinExistence type="inferred from homology"/>
<gene>
    <name evidence="1" type="primary">asnS</name>
    <name type="ordered locus">Patl_1879</name>
</gene>
<evidence type="ECO:0000255" key="1">
    <source>
        <dbReference type="HAMAP-Rule" id="MF_00534"/>
    </source>
</evidence>
<comment type="catalytic activity">
    <reaction evidence="1">
        <text>tRNA(Asn) + L-asparagine + ATP = L-asparaginyl-tRNA(Asn) + AMP + diphosphate + H(+)</text>
        <dbReference type="Rhea" id="RHEA:11180"/>
        <dbReference type="Rhea" id="RHEA-COMP:9659"/>
        <dbReference type="Rhea" id="RHEA-COMP:9674"/>
        <dbReference type="ChEBI" id="CHEBI:15378"/>
        <dbReference type="ChEBI" id="CHEBI:30616"/>
        <dbReference type="ChEBI" id="CHEBI:33019"/>
        <dbReference type="ChEBI" id="CHEBI:58048"/>
        <dbReference type="ChEBI" id="CHEBI:78442"/>
        <dbReference type="ChEBI" id="CHEBI:78515"/>
        <dbReference type="ChEBI" id="CHEBI:456215"/>
        <dbReference type="EC" id="6.1.1.22"/>
    </reaction>
</comment>
<comment type="subunit">
    <text evidence="1">Homodimer.</text>
</comment>
<comment type="subcellular location">
    <subcellularLocation>
        <location evidence="1">Cytoplasm</location>
    </subcellularLocation>
</comment>
<comment type="similarity">
    <text evidence="1">Belongs to the class-II aminoacyl-tRNA synthetase family.</text>
</comment>
<reference key="1">
    <citation type="submission" date="2006-06" db="EMBL/GenBank/DDBJ databases">
        <title>Complete sequence of Pseudoalteromonas atlantica T6c.</title>
        <authorList>
            <consortium name="US DOE Joint Genome Institute"/>
            <person name="Copeland A."/>
            <person name="Lucas S."/>
            <person name="Lapidus A."/>
            <person name="Barry K."/>
            <person name="Detter J.C."/>
            <person name="Glavina del Rio T."/>
            <person name="Hammon N."/>
            <person name="Israni S."/>
            <person name="Dalin E."/>
            <person name="Tice H."/>
            <person name="Pitluck S."/>
            <person name="Saunders E."/>
            <person name="Brettin T."/>
            <person name="Bruce D."/>
            <person name="Han C."/>
            <person name="Tapia R."/>
            <person name="Gilna P."/>
            <person name="Schmutz J."/>
            <person name="Larimer F."/>
            <person name="Land M."/>
            <person name="Hauser L."/>
            <person name="Kyrpides N."/>
            <person name="Kim E."/>
            <person name="Karls A.C."/>
            <person name="Bartlett D."/>
            <person name="Higgins B.P."/>
            <person name="Richardson P."/>
        </authorList>
    </citation>
    <scope>NUCLEOTIDE SEQUENCE [LARGE SCALE GENOMIC DNA]</scope>
    <source>
        <strain>T6c / ATCC BAA-1087</strain>
    </source>
</reference>
<keyword id="KW-0030">Aminoacyl-tRNA synthetase</keyword>
<keyword id="KW-0067">ATP-binding</keyword>
<keyword id="KW-0963">Cytoplasm</keyword>
<keyword id="KW-0436">Ligase</keyword>
<keyword id="KW-0547">Nucleotide-binding</keyword>
<keyword id="KW-0648">Protein biosynthesis</keyword>
<dbReference type="EC" id="6.1.1.22" evidence="1"/>
<dbReference type="EMBL" id="CP000388">
    <property type="protein sequence ID" value="ABG40399.1"/>
    <property type="molecule type" value="Genomic_DNA"/>
</dbReference>
<dbReference type="RefSeq" id="WP_011574696.1">
    <property type="nucleotide sequence ID" value="NC_008228.1"/>
</dbReference>
<dbReference type="SMR" id="Q15UN9"/>
<dbReference type="STRING" id="342610.Patl_1879"/>
<dbReference type="KEGG" id="pat:Patl_1879"/>
<dbReference type="eggNOG" id="COG0017">
    <property type="taxonomic scope" value="Bacteria"/>
</dbReference>
<dbReference type="HOGENOM" id="CLU_004553_2_0_6"/>
<dbReference type="OrthoDB" id="9762036at2"/>
<dbReference type="Proteomes" id="UP000001981">
    <property type="component" value="Chromosome"/>
</dbReference>
<dbReference type="GO" id="GO:0005737">
    <property type="term" value="C:cytoplasm"/>
    <property type="evidence" value="ECO:0007669"/>
    <property type="project" value="UniProtKB-SubCell"/>
</dbReference>
<dbReference type="GO" id="GO:0004816">
    <property type="term" value="F:asparagine-tRNA ligase activity"/>
    <property type="evidence" value="ECO:0007669"/>
    <property type="project" value="UniProtKB-UniRule"/>
</dbReference>
<dbReference type="GO" id="GO:0005524">
    <property type="term" value="F:ATP binding"/>
    <property type="evidence" value="ECO:0007669"/>
    <property type="project" value="UniProtKB-UniRule"/>
</dbReference>
<dbReference type="GO" id="GO:0003676">
    <property type="term" value="F:nucleic acid binding"/>
    <property type="evidence" value="ECO:0007669"/>
    <property type="project" value="InterPro"/>
</dbReference>
<dbReference type="GO" id="GO:0006421">
    <property type="term" value="P:asparaginyl-tRNA aminoacylation"/>
    <property type="evidence" value="ECO:0007669"/>
    <property type="project" value="UniProtKB-UniRule"/>
</dbReference>
<dbReference type="CDD" id="cd00776">
    <property type="entry name" value="AsxRS_core"/>
    <property type="match status" value="1"/>
</dbReference>
<dbReference type="CDD" id="cd04318">
    <property type="entry name" value="EcAsnRS_like_N"/>
    <property type="match status" value="1"/>
</dbReference>
<dbReference type="FunFam" id="3.30.930.10:FF:000016">
    <property type="entry name" value="Asparagine--tRNA ligase"/>
    <property type="match status" value="1"/>
</dbReference>
<dbReference type="Gene3D" id="3.30.930.10">
    <property type="entry name" value="Bira Bifunctional Protein, Domain 2"/>
    <property type="match status" value="1"/>
</dbReference>
<dbReference type="Gene3D" id="2.40.50.140">
    <property type="entry name" value="Nucleic acid-binding proteins"/>
    <property type="match status" value="1"/>
</dbReference>
<dbReference type="HAMAP" id="MF_00534">
    <property type="entry name" value="Asn_tRNA_synth"/>
    <property type="match status" value="1"/>
</dbReference>
<dbReference type="InterPro" id="IPR004364">
    <property type="entry name" value="Aa-tRNA-synt_II"/>
</dbReference>
<dbReference type="InterPro" id="IPR006195">
    <property type="entry name" value="aa-tRNA-synth_II"/>
</dbReference>
<dbReference type="InterPro" id="IPR045864">
    <property type="entry name" value="aa-tRNA-synth_II/BPL/LPL"/>
</dbReference>
<dbReference type="InterPro" id="IPR004522">
    <property type="entry name" value="Asn-tRNA-ligase"/>
</dbReference>
<dbReference type="InterPro" id="IPR002312">
    <property type="entry name" value="Asp/Asn-tRNA-synth_IIb"/>
</dbReference>
<dbReference type="InterPro" id="IPR012340">
    <property type="entry name" value="NA-bd_OB-fold"/>
</dbReference>
<dbReference type="InterPro" id="IPR004365">
    <property type="entry name" value="NA-bd_OB_tRNA"/>
</dbReference>
<dbReference type="NCBIfam" id="TIGR00457">
    <property type="entry name" value="asnS"/>
    <property type="match status" value="1"/>
</dbReference>
<dbReference type="NCBIfam" id="NF003037">
    <property type="entry name" value="PRK03932.1"/>
    <property type="match status" value="1"/>
</dbReference>
<dbReference type="PANTHER" id="PTHR22594:SF34">
    <property type="entry name" value="ASPARAGINE--TRNA LIGASE, MITOCHONDRIAL-RELATED"/>
    <property type="match status" value="1"/>
</dbReference>
<dbReference type="PANTHER" id="PTHR22594">
    <property type="entry name" value="ASPARTYL/LYSYL-TRNA SYNTHETASE"/>
    <property type="match status" value="1"/>
</dbReference>
<dbReference type="Pfam" id="PF00152">
    <property type="entry name" value="tRNA-synt_2"/>
    <property type="match status" value="1"/>
</dbReference>
<dbReference type="Pfam" id="PF01336">
    <property type="entry name" value="tRNA_anti-codon"/>
    <property type="match status" value="1"/>
</dbReference>
<dbReference type="PRINTS" id="PR01042">
    <property type="entry name" value="TRNASYNTHASP"/>
</dbReference>
<dbReference type="SUPFAM" id="SSF55681">
    <property type="entry name" value="Class II aaRS and biotin synthetases"/>
    <property type="match status" value="1"/>
</dbReference>
<dbReference type="SUPFAM" id="SSF50249">
    <property type="entry name" value="Nucleic acid-binding proteins"/>
    <property type="match status" value="1"/>
</dbReference>
<dbReference type="PROSITE" id="PS50862">
    <property type="entry name" value="AA_TRNA_LIGASE_II"/>
    <property type="match status" value="1"/>
</dbReference>
<sequence>MAQAPVADIFAGKYSVGQQVTVKGWVRTRRDSKAGLSFVALHDGSCFDPIQVIALNTLNNYADIQRLTTSCSIIATGVLKESQGQGQSLEIEADEIEIVGWVENPDTYPMAPKRHSLEYLREHAHLRPRTNVIGAVTRVRNCLSQAIHRFFHENGYCWVSTPILTASDTEGAGEMFRVSTLDMMNVPTTEQGQVDFSQDFFGKETFLTVSGQLNGETYATAMSKIYTFGPTFRAENSNTSRHLAEFWMIEPEVAFADLSDIAQLSEDLLKYVFKAVLAERADDMAFFAQRINKDAITRLEKVIEQDFVRMDYTDAIEILQNCGKKFEFPVSWGVDLSSEHERYLAEEHVGAPIIMQNYPKDIKAFYMRINDDNKTVAAMDVLAPGIGEIIGGSQREERLDVFDRRLAEMGLDQEDYSWYRDLRRYGTVPHSGFGLGFERLVAYVTGMQNVRDVIAFPRTPGNANY</sequence>
<protein>
    <recommendedName>
        <fullName evidence="1">Asparagine--tRNA ligase</fullName>
        <ecNumber evidence="1">6.1.1.22</ecNumber>
    </recommendedName>
    <alternativeName>
        <fullName evidence="1">Asparaginyl-tRNA synthetase</fullName>
        <shortName evidence="1">AsnRS</shortName>
    </alternativeName>
</protein>